<accession>O08976</accession>
<evidence type="ECO:0000250" key="1"/>
<evidence type="ECO:0000305" key="2"/>
<proteinExistence type="evidence at transcript level"/>
<gene>
    <name type="primary">Pbsn</name>
    <name type="synonym">Prbs</name>
</gene>
<name>PBAS_MOUSE</name>
<sequence>MMRVIILLLTLHVLGVSSVMSLKKKIDGPWQTIYLAASTMEKINEGSPLRTYFRHILCGRRCNQVYLYFFIKKGTKCQLYKVIGRKKQEVYYAQYEGSIAFMLKMVNEKILLFHYFNKNRRNDVTRVAGVLAKGKQLNKEEMTEFMNLVEEMGIEEENVQRIMDTDNCPSKIKP</sequence>
<organism>
    <name type="scientific">Mus musculus</name>
    <name type="common">Mouse</name>
    <dbReference type="NCBI Taxonomy" id="10090"/>
    <lineage>
        <taxon>Eukaryota</taxon>
        <taxon>Metazoa</taxon>
        <taxon>Chordata</taxon>
        <taxon>Craniata</taxon>
        <taxon>Vertebrata</taxon>
        <taxon>Euteleostomi</taxon>
        <taxon>Mammalia</taxon>
        <taxon>Eutheria</taxon>
        <taxon>Euarchontoglires</taxon>
        <taxon>Glires</taxon>
        <taxon>Rodentia</taxon>
        <taxon>Myomorpha</taxon>
        <taxon>Muroidea</taxon>
        <taxon>Muridae</taxon>
        <taxon>Murinae</taxon>
        <taxon>Mus</taxon>
        <taxon>Mus</taxon>
    </lineage>
</organism>
<keyword id="KW-1015">Disulfide bond</keyword>
<keyword id="KW-1185">Reference proteome</keyword>
<keyword id="KW-0964">Secreted</keyword>
<keyword id="KW-0732">Signal</keyword>
<feature type="signal peptide" evidence="1">
    <location>
        <begin position="1"/>
        <end position="18"/>
    </location>
</feature>
<feature type="chain" id="PRO_0000017954" description="Probasin">
    <location>
        <begin position="19"/>
        <end position="174"/>
    </location>
</feature>
<feature type="disulfide bond" evidence="1">
    <location>
        <begin position="77"/>
        <end position="168"/>
    </location>
</feature>
<reference key="1">
    <citation type="submission" date="1998-02" db="EMBL/GenBank/DDBJ databases">
        <title>Cloning and characterization of the mouse probasin cDNA.</title>
        <authorList>
            <person name="Johnson M.A."/>
            <person name="Greenberg N.M."/>
        </authorList>
    </citation>
    <scope>NUCLEOTIDE SEQUENCE [MRNA]</scope>
    <source>
        <strain>C57BL/6J</strain>
        <tissue>Prostate</tissue>
    </source>
</reference>
<protein>
    <recommendedName>
        <fullName>Probasin</fullName>
        <shortName>PB</shortName>
    </recommendedName>
</protein>
<comment type="subcellular location">
    <subcellularLocation>
        <location evidence="2">Secreted</location>
    </subcellularLocation>
</comment>
<comment type="similarity">
    <text evidence="2">Belongs to the calycin superfamily. Lipocalin family.</text>
</comment>
<dbReference type="EMBL" id="AF005204">
    <property type="protein sequence ID" value="AAC01954.1"/>
    <property type="molecule type" value="mRNA"/>
</dbReference>
<dbReference type="CCDS" id="CCDS30249.1"/>
<dbReference type="RefSeq" id="NP_059499.1">
    <property type="nucleotide sequence ID" value="NM_017471.3"/>
</dbReference>
<dbReference type="SMR" id="O08976"/>
<dbReference type="FunCoup" id="O08976">
    <property type="interactions" value="34"/>
</dbReference>
<dbReference type="STRING" id="10090.ENSMUSP00000000003"/>
<dbReference type="iPTMnet" id="O08976"/>
<dbReference type="PhosphoSitePlus" id="O08976"/>
<dbReference type="PaxDb" id="10090-ENSMUSP00000000003"/>
<dbReference type="ProteomicsDB" id="294021"/>
<dbReference type="DNASU" id="54192"/>
<dbReference type="Ensembl" id="ENSMUST00000000003.14">
    <property type="protein sequence ID" value="ENSMUSP00000000003.8"/>
    <property type="gene ID" value="ENSMUSG00000000003.16"/>
</dbReference>
<dbReference type="GeneID" id="54192"/>
<dbReference type="KEGG" id="mmu:54192"/>
<dbReference type="UCSC" id="uc009tqr.1">
    <property type="organism name" value="mouse"/>
</dbReference>
<dbReference type="AGR" id="MGI:1860484"/>
<dbReference type="CTD" id="54192"/>
<dbReference type="MGI" id="MGI:1860484">
    <property type="gene designation" value="Pbsn"/>
</dbReference>
<dbReference type="VEuPathDB" id="HostDB:ENSMUSG00000000003"/>
<dbReference type="eggNOG" id="ENOG502TDZD">
    <property type="taxonomic scope" value="Eukaryota"/>
</dbReference>
<dbReference type="GeneTree" id="ENSGT01050000244868"/>
<dbReference type="InParanoid" id="O08976"/>
<dbReference type="OMA" id="IKFYAKF"/>
<dbReference type="OrthoDB" id="9450562at2759"/>
<dbReference type="PhylomeDB" id="O08976"/>
<dbReference type="TreeFam" id="TF338197"/>
<dbReference type="BioGRID-ORCS" id="54192">
    <property type="hits" value="1 hit in 76 CRISPR screens"/>
</dbReference>
<dbReference type="ChiTaRS" id="Pbsn">
    <property type="organism name" value="mouse"/>
</dbReference>
<dbReference type="PRO" id="PR:O08976"/>
<dbReference type="Proteomes" id="UP000000589">
    <property type="component" value="Chromosome X"/>
</dbReference>
<dbReference type="RNAct" id="O08976">
    <property type="molecule type" value="protein"/>
</dbReference>
<dbReference type="Bgee" id="ENSMUSG00000000003">
    <property type="expression patterns" value="Expressed in prostate gland ventral lobe and 4 other cell types or tissues"/>
</dbReference>
<dbReference type="ExpressionAtlas" id="O08976">
    <property type="expression patterns" value="baseline and differential"/>
</dbReference>
<dbReference type="GO" id="GO:0005576">
    <property type="term" value="C:extracellular region"/>
    <property type="evidence" value="ECO:0000314"/>
    <property type="project" value="MGI"/>
</dbReference>
<dbReference type="GO" id="GO:0036094">
    <property type="term" value="F:small molecule binding"/>
    <property type="evidence" value="ECO:0007669"/>
    <property type="project" value="InterPro"/>
</dbReference>
<dbReference type="CDD" id="cd19427">
    <property type="entry name" value="lipocalin_OBP-like"/>
    <property type="match status" value="1"/>
</dbReference>
<dbReference type="Gene3D" id="2.40.128.20">
    <property type="match status" value="1"/>
</dbReference>
<dbReference type="InterPro" id="IPR012674">
    <property type="entry name" value="Calycin"/>
</dbReference>
<dbReference type="InterPro" id="IPR002345">
    <property type="entry name" value="Lipocalin"/>
</dbReference>
<dbReference type="InterPro" id="IPR000566">
    <property type="entry name" value="Lipocln_cytosolic_FA-bd_dom"/>
</dbReference>
<dbReference type="InterPro" id="IPR002448">
    <property type="entry name" value="OBP-like"/>
</dbReference>
<dbReference type="PANTHER" id="PTHR11430">
    <property type="entry name" value="LIPOCALIN"/>
    <property type="match status" value="1"/>
</dbReference>
<dbReference type="PANTHER" id="PTHR11430:SF132">
    <property type="entry name" value="PROBASIN"/>
    <property type="match status" value="1"/>
</dbReference>
<dbReference type="Pfam" id="PF00061">
    <property type="entry name" value="Lipocalin"/>
    <property type="match status" value="1"/>
</dbReference>
<dbReference type="PRINTS" id="PR01173">
    <property type="entry name" value="ODORANTBNDNG"/>
</dbReference>
<dbReference type="SUPFAM" id="SSF50814">
    <property type="entry name" value="Lipocalins"/>
    <property type="match status" value="1"/>
</dbReference>